<evidence type="ECO:0000255" key="1">
    <source>
        <dbReference type="HAMAP-Rule" id="MF_01325"/>
    </source>
</evidence>
<evidence type="ECO:0000305" key="2"/>
<comment type="function">
    <text evidence="1">One of the primary rRNA binding proteins, it binds directly near the 3'-end of the 23S rRNA, where it nucleates assembly of the 50S subunit.</text>
</comment>
<comment type="subunit">
    <text evidence="1">Part of the 50S ribosomal subunit. Forms a cluster with proteins L14 and L19.</text>
</comment>
<comment type="PTM">
    <text evidence="1">Methylated by PrmB.</text>
</comment>
<comment type="similarity">
    <text evidence="1">Belongs to the universal ribosomal protein uL3 family.</text>
</comment>
<protein>
    <recommendedName>
        <fullName evidence="1">Large ribosomal subunit protein uL3</fullName>
    </recommendedName>
    <alternativeName>
        <fullName evidence="2">50S ribosomal protein L3</fullName>
    </alternativeName>
</protein>
<name>RL3_MANSM</name>
<feature type="chain" id="PRO_0000241363" description="Large ribosomal subunit protein uL3">
    <location>
        <begin position="1"/>
        <end position="208"/>
    </location>
</feature>
<feature type="modified residue" description="N5-methylglutamine" evidence="1">
    <location>
        <position position="149"/>
    </location>
</feature>
<accession>Q65QV5</accession>
<sequence length="208" mass="22340">MIGLVGRKVGMTRIFTEEGVSIPVTVIEIEANRVTQVKTLENDGYSAVQVTTGSKKASRVTKPEAGHFVKAGVEAGRGLWEFRTEGEEFTLGQEINVDIFADVKKVDVTGTSKGKGFQGGVKRWNFRTQDATHGNSLSHRVLGSIGQNQTPGRVFKGKKMAGHLGAERVTVQSLEVVRVDAERKLLLVKGAVPGATNSDVIVKPAVKA</sequence>
<reference key="1">
    <citation type="journal article" date="2004" name="Nat. Biotechnol.">
        <title>The genome sequence of the capnophilic rumen bacterium Mannheimia succiniciproducens.</title>
        <authorList>
            <person name="Hong S.H."/>
            <person name="Kim J.S."/>
            <person name="Lee S.Y."/>
            <person name="In Y.H."/>
            <person name="Choi S.S."/>
            <person name="Rih J.-K."/>
            <person name="Kim C.H."/>
            <person name="Jeong H."/>
            <person name="Hur C.G."/>
            <person name="Kim J.J."/>
        </authorList>
    </citation>
    <scope>NUCLEOTIDE SEQUENCE [LARGE SCALE GENOMIC DNA]</scope>
    <source>
        <strain>KCTC 0769BP / MBEL55E</strain>
    </source>
</reference>
<gene>
    <name evidence="1" type="primary">rplC</name>
    <name type="ordered locus">MS2048</name>
</gene>
<keyword id="KW-0488">Methylation</keyword>
<keyword id="KW-0687">Ribonucleoprotein</keyword>
<keyword id="KW-0689">Ribosomal protein</keyword>
<keyword id="KW-0694">RNA-binding</keyword>
<keyword id="KW-0699">rRNA-binding</keyword>
<dbReference type="EMBL" id="AE016827">
    <property type="protein sequence ID" value="AAU38655.1"/>
    <property type="molecule type" value="Genomic_DNA"/>
</dbReference>
<dbReference type="RefSeq" id="WP_011201204.1">
    <property type="nucleotide sequence ID" value="NC_006300.1"/>
</dbReference>
<dbReference type="SMR" id="Q65QV5"/>
<dbReference type="STRING" id="221988.MS2048"/>
<dbReference type="KEGG" id="msu:MS2048"/>
<dbReference type="eggNOG" id="COG0087">
    <property type="taxonomic scope" value="Bacteria"/>
</dbReference>
<dbReference type="HOGENOM" id="CLU_044142_4_1_6"/>
<dbReference type="OrthoDB" id="9806135at2"/>
<dbReference type="Proteomes" id="UP000000607">
    <property type="component" value="Chromosome"/>
</dbReference>
<dbReference type="GO" id="GO:0022625">
    <property type="term" value="C:cytosolic large ribosomal subunit"/>
    <property type="evidence" value="ECO:0007669"/>
    <property type="project" value="TreeGrafter"/>
</dbReference>
<dbReference type="GO" id="GO:0019843">
    <property type="term" value="F:rRNA binding"/>
    <property type="evidence" value="ECO:0007669"/>
    <property type="project" value="UniProtKB-UniRule"/>
</dbReference>
<dbReference type="GO" id="GO:0003735">
    <property type="term" value="F:structural constituent of ribosome"/>
    <property type="evidence" value="ECO:0007669"/>
    <property type="project" value="InterPro"/>
</dbReference>
<dbReference type="GO" id="GO:0006412">
    <property type="term" value="P:translation"/>
    <property type="evidence" value="ECO:0007669"/>
    <property type="project" value="UniProtKB-UniRule"/>
</dbReference>
<dbReference type="FunFam" id="2.40.30.10:FF:000004">
    <property type="entry name" value="50S ribosomal protein L3"/>
    <property type="match status" value="1"/>
</dbReference>
<dbReference type="FunFam" id="3.30.160.810:FF:000001">
    <property type="entry name" value="50S ribosomal protein L3"/>
    <property type="match status" value="1"/>
</dbReference>
<dbReference type="Gene3D" id="3.30.160.810">
    <property type="match status" value="1"/>
</dbReference>
<dbReference type="Gene3D" id="2.40.30.10">
    <property type="entry name" value="Translation factors"/>
    <property type="match status" value="1"/>
</dbReference>
<dbReference type="HAMAP" id="MF_01325_B">
    <property type="entry name" value="Ribosomal_uL3_B"/>
    <property type="match status" value="1"/>
</dbReference>
<dbReference type="InterPro" id="IPR000597">
    <property type="entry name" value="Ribosomal_uL3"/>
</dbReference>
<dbReference type="InterPro" id="IPR019927">
    <property type="entry name" value="Ribosomal_uL3_bac/org-type"/>
</dbReference>
<dbReference type="InterPro" id="IPR019926">
    <property type="entry name" value="Ribosomal_uL3_CS"/>
</dbReference>
<dbReference type="InterPro" id="IPR009000">
    <property type="entry name" value="Transl_B-barrel_sf"/>
</dbReference>
<dbReference type="NCBIfam" id="TIGR03625">
    <property type="entry name" value="L3_bact"/>
    <property type="match status" value="1"/>
</dbReference>
<dbReference type="PANTHER" id="PTHR11229">
    <property type="entry name" value="50S RIBOSOMAL PROTEIN L3"/>
    <property type="match status" value="1"/>
</dbReference>
<dbReference type="PANTHER" id="PTHR11229:SF16">
    <property type="entry name" value="LARGE RIBOSOMAL SUBUNIT PROTEIN UL3C"/>
    <property type="match status" value="1"/>
</dbReference>
<dbReference type="Pfam" id="PF00297">
    <property type="entry name" value="Ribosomal_L3"/>
    <property type="match status" value="1"/>
</dbReference>
<dbReference type="SUPFAM" id="SSF50447">
    <property type="entry name" value="Translation proteins"/>
    <property type="match status" value="1"/>
</dbReference>
<dbReference type="PROSITE" id="PS00474">
    <property type="entry name" value="RIBOSOMAL_L3"/>
    <property type="match status" value="1"/>
</dbReference>
<proteinExistence type="inferred from homology"/>
<organism>
    <name type="scientific">Mannheimia succiniciproducens (strain KCTC 0769BP / MBEL55E)</name>
    <dbReference type="NCBI Taxonomy" id="221988"/>
    <lineage>
        <taxon>Bacteria</taxon>
        <taxon>Pseudomonadati</taxon>
        <taxon>Pseudomonadota</taxon>
        <taxon>Gammaproteobacteria</taxon>
        <taxon>Pasteurellales</taxon>
        <taxon>Pasteurellaceae</taxon>
        <taxon>Basfia</taxon>
    </lineage>
</organism>